<comment type="function">
    <text evidence="1">Allows the formation of correctly charged Asn-tRNA(Asn) or Gln-tRNA(Gln) through the transamidation of misacylated Asp-tRNA(Asn) or Glu-tRNA(Gln) in organisms which lack either or both of asparaginyl-tRNA or glutaminyl-tRNA synthetases. The reaction takes place in the presence of glutamine and ATP through an activated phospho-Asp-tRNA(Asn) or phospho-Glu-tRNA(Gln).</text>
</comment>
<comment type="catalytic activity">
    <reaction evidence="1">
        <text>L-glutamyl-tRNA(Gln) + L-glutamine + ATP + H2O = L-glutaminyl-tRNA(Gln) + L-glutamate + ADP + phosphate + H(+)</text>
        <dbReference type="Rhea" id="RHEA:17521"/>
        <dbReference type="Rhea" id="RHEA-COMP:9681"/>
        <dbReference type="Rhea" id="RHEA-COMP:9684"/>
        <dbReference type="ChEBI" id="CHEBI:15377"/>
        <dbReference type="ChEBI" id="CHEBI:15378"/>
        <dbReference type="ChEBI" id="CHEBI:29985"/>
        <dbReference type="ChEBI" id="CHEBI:30616"/>
        <dbReference type="ChEBI" id="CHEBI:43474"/>
        <dbReference type="ChEBI" id="CHEBI:58359"/>
        <dbReference type="ChEBI" id="CHEBI:78520"/>
        <dbReference type="ChEBI" id="CHEBI:78521"/>
        <dbReference type="ChEBI" id="CHEBI:456216"/>
    </reaction>
</comment>
<comment type="catalytic activity">
    <reaction evidence="1">
        <text>L-aspartyl-tRNA(Asn) + L-glutamine + ATP + H2O = L-asparaginyl-tRNA(Asn) + L-glutamate + ADP + phosphate + 2 H(+)</text>
        <dbReference type="Rhea" id="RHEA:14513"/>
        <dbReference type="Rhea" id="RHEA-COMP:9674"/>
        <dbReference type="Rhea" id="RHEA-COMP:9677"/>
        <dbReference type="ChEBI" id="CHEBI:15377"/>
        <dbReference type="ChEBI" id="CHEBI:15378"/>
        <dbReference type="ChEBI" id="CHEBI:29985"/>
        <dbReference type="ChEBI" id="CHEBI:30616"/>
        <dbReference type="ChEBI" id="CHEBI:43474"/>
        <dbReference type="ChEBI" id="CHEBI:58359"/>
        <dbReference type="ChEBI" id="CHEBI:78515"/>
        <dbReference type="ChEBI" id="CHEBI:78516"/>
        <dbReference type="ChEBI" id="CHEBI:456216"/>
    </reaction>
</comment>
<comment type="subunit">
    <text evidence="1">Heterotrimer of A, B and C subunits.</text>
</comment>
<comment type="similarity">
    <text evidence="1">Belongs to the GatC family.</text>
</comment>
<gene>
    <name evidence="1" type="primary">gatC</name>
    <name type="ordered locus">RPR_01250</name>
</gene>
<proteinExistence type="inferred from homology"/>
<reference key="1">
    <citation type="journal article" date="2009" name="PLoS ONE">
        <title>Genome sequence of the endosymbiont Rickettsia peacockii and comparison with virulent Rickettsia rickettsii: identification of virulence factors.</title>
        <authorList>
            <person name="Felsheim R.F."/>
            <person name="Kurtti T.J."/>
            <person name="Munderloh U.G."/>
        </authorList>
    </citation>
    <scope>NUCLEOTIDE SEQUENCE [LARGE SCALE GENOMIC DNA]</scope>
    <source>
        <strain>Rustic</strain>
    </source>
</reference>
<name>GATC_RICPU</name>
<protein>
    <recommendedName>
        <fullName evidence="1">Aspartyl/glutamyl-tRNA(Asn/Gln) amidotransferase subunit C</fullName>
        <shortName evidence="1">Asp/Glu-ADT subunit C</shortName>
        <ecNumber evidence="1">6.3.5.-</ecNumber>
    </recommendedName>
</protein>
<dbReference type="EC" id="6.3.5.-" evidence="1"/>
<dbReference type="EMBL" id="CP001227">
    <property type="protein sequence ID" value="ACR47164.1"/>
    <property type="molecule type" value="Genomic_DNA"/>
</dbReference>
<dbReference type="RefSeq" id="WP_012736454.1">
    <property type="nucleotide sequence ID" value="NC_012730.1"/>
</dbReference>
<dbReference type="SMR" id="C4K0R3"/>
<dbReference type="KEGG" id="rpk:RPR_01250"/>
<dbReference type="HOGENOM" id="CLU_105899_2_0_5"/>
<dbReference type="Proteomes" id="UP000005015">
    <property type="component" value="Chromosome"/>
</dbReference>
<dbReference type="GO" id="GO:0050566">
    <property type="term" value="F:asparaginyl-tRNA synthase (glutamine-hydrolyzing) activity"/>
    <property type="evidence" value="ECO:0007669"/>
    <property type="project" value="RHEA"/>
</dbReference>
<dbReference type="GO" id="GO:0005524">
    <property type="term" value="F:ATP binding"/>
    <property type="evidence" value="ECO:0007669"/>
    <property type="project" value="UniProtKB-KW"/>
</dbReference>
<dbReference type="GO" id="GO:0050567">
    <property type="term" value="F:glutaminyl-tRNA synthase (glutamine-hydrolyzing) activity"/>
    <property type="evidence" value="ECO:0007669"/>
    <property type="project" value="UniProtKB-UniRule"/>
</dbReference>
<dbReference type="GO" id="GO:0070681">
    <property type="term" value="P:glutaminyl-tRNAGln biosynthesis via transamidation"/>
    <property type="evidence" value="ECO:0007669"/>
    <property type="project" value="TreeGrafter"/>
</dbReference>
<dbReference type="GO" id="GO:0006450">
    <property type="term" value="P:regulation of translational fidelity"/>
    <property type="evidence" value="ECO:0007669"/>
    <property type="project" value="InterPro"/>
</dbReference>
<dbReference type="GO" id="GO:0006412">
    <property type="term" value="P:translation"/>
    <property type="evidence" value="ECO:0007669"/>
    <property type="project" value="UniProtKB-UniRule"/>
</dbReference>
<dbReference type="Gene3D" id="1.10.20.60">
    <property type="entry name" value="Glu-tRNAGln amidotransferase C subunit, N-terminal domain"/>
    <property type="match status" value="1"/>
</dbReference>
<dbReference type="HAMAP" id="MF_00122">
    <property type="entry name" value="GatC"/>
    <property type="match status" value="1"/>
</dbReference>
<dbReference type="InterPro" id="IPR036113">
    <property type="entry name" value="Asp/Glu-ADT_sf_sub_c"/>
</dbReference>
<dbReference type="InterPro" id="IPR003837">
    <property type="entry name" value="GatC"/>
</dbReference>
<dbReference type="NCBIfam" id="TIGR00135">
    <property type="entry name" value="gatC"/>
    <property type="match status" value="1"/>
</dbReference>
<dbReference type="PANTHER" id="PTHR15004">
    <property type="entry name" value="GLUTAMYL-TRNA(GLN) AMIDOTRANSFERASE SUBUNIT C, MITOCHONDRIAL"/>
    <property type="match status" value="1"/>
</dbReference>
<dbReference type="PANTHER" id="PTHR15004:SF0">
    <property type="entry name" value="GLUTAMYL-TRNA(GLN) AMIDOTRANSFERASE SUBUNIT C, MITOCHONDRIAL"/>
    <property type="match status" value="1"/>
</dbReference>
<dbReference type="Pfam" id="PF02686">
    <property type="entry name" value="GatC"/>
    <property type="match status" value="1"/>
</dbReference>
<dbReference type="SUPFAM" id="SSF141000">
    <property type="entry name" value="Glu-tRNAGln amidotransferase C subunit"/>
    <property type="match status" value="1"/>
</dbReference>
<organism>
    <name type="scientific">Rickettsia peacockii (strain Rustic)</name>
    <dbReference type="NCBI Taxonomy" id="562019"/>
    <lineage>
        <taxon>Bacteria</taxon>
        <taxon>Pseudomonadati</taxon>
        <taxon>Pseudomonadota</taxon>
        <taxon>Alphaproteobacteria</taxon>
        <taxon>Rickettsiales</taxon>
        <taxon>Rickettsiaceae</taxon>
        <taxon>Rickettsieae</taxon>
        <taxon>Rickettsia</taxon>
        <taxon>spotted fever group</taxon>
    </lineage>
</organism>
<evidence type="ECO:0000255" key="1">
    <source>
        <dbReference type="HAMAP-Rule" id="MF_00122"/>
    </source>
</evidence>
<keyword id="KW-0067">ATP-binding</keyword>
<keyword id="KW-0436">Ligase</keyword>
<keyword id="KW-0547">Nucleotide-binding</keyword>
<keyword id="KW-0648">Protein biosynthesis</keyword>
<feature type="chain" id="PRO_1000203078" description="Aspartyl/glutamyl-tRNA(Asn/Gln) amidotransferase subunit C">
    <location>
        <begin position="1"/>
        <end position="100"/>
    </location>
</feature>
<accession>C4K0R3</accession>
<sequence length="100" mass="11369">MITKEEAQKIAKLARLKFEEDTIEKFFTQLSTIMDMIDILNEIDCKDIEPLTSVCNMNARMREDAVTSSDLSSELFDNVSGNSAQLAKEVKYFITPKVVE</sequence>